<keyword id="KW-0133">Cell shape</keyword>
<keyword id="KW-0961">Cell wall biogenesis/degradation</keyword>
<keyword id="KW-0413">Isomerase</keyword>
<keyword id="KW-0573">Peptidoglycan synthesis</keyword>
<feature type="chain" id="PRO_1000047618" description="Glutamate racemase">
    <location>
        <begin position="1"/>
        <end position="266"/>
    </location>
</feature>
<feature type="active site" description="Proton donor/acceptor" evidence="1">
    <location>
        <position position="72"/>
    </location>
</feature>
<feature type="active site" description="Proton donor/acceptor" evidence="1">
    <location>
        <position position="184"/>
    </location>
</feature>
<feature type="binding site" evidence="1">
    <location>
        <begin position="9"/>
        <end position="10"/>
    </location>
    <ligand>
        <name>substrate</name>
    </ligand>
</feature>
<feature type="binding site" evidence="1">
    <location>
        <begin position="41"/>
        <end position="42"/>
    </location>
    <ligand>
        <name>substrate</name>
    </ligand>
</feature>
<feature type="binding site" evidence="1">
    <location>
        <begin position="73"/>
        <end position="74"/>
    </location>
    <ligand>
        <name>substrate</name>
    </ligand>
</feature>
<feature type="binding site" evidence="1">
    <location>
        <begin position="185"/>
        <end position="186"/>
    </location>
    <ligand>
        <name>substrate</name>
    </ligand>
</feature>
<proteinExistence type="inferred from homology"/>
<sequence length="266" mass="29760">MNKPIGVIDSGVGGLTVAKEIMRQLPNETIYYLGDIARCPYGPRPGDEVKQFTTQLANKLMQFDIKMLVIACNTATAVALEHLQQMLPIPVIGVIEPGSRTAIMTTKNQNVLILGTEGTIKSEAYRHHIKHINPNVHVYGVACPGFVPLVEQMRYDDPTITSIVIHQTLKQWRNTDADTIILGCTHYPLLYKPINDYFGGEKKVISSGLETAREVSALLTFSNEHASYTQHPEHRFFATGDTVHIKNIILQWLKLDVEVERISVDE</sequence>
<accession>Q4L5F5</accession>
<evidence type="ECO:0000255" key="1">
    <source>
        <dbReference type="HAMAP-Rule" id="MF_00258"/>
    </source>
</evidence>
<reference key="1">
    <citation type="journal article" date="2005" name="J. Bacteriol.">
        <title>Whole-genome sequencing of Staphylococcus haemolyticus uncovers the extreme plasticity of its genome and the evolution of human-colonizing staphylococcal species.</title>
        <authorList>
            <person name="Takeuchi F."/>
            <person name="Watanabe S."/>
            <person name="Baba T."/>
            <person name="Yuzawa H."/>
            <person name="Ito T."/>
            <person name="Morimoto Y."/>
            <person name="Kuroda M."/>
            <person name="Cui L."/>
            <person name="Takahashi M."/>
            <person name="Ankai A."/>
            <person name="Baba S."/>
            <person name="Fukui S."/>
            <person name="Lee J.C."/>
            <person name="Hiramatsu K."/>
        </authorList>
    </citation>
    <scope>NUCLEOTIDE SEQUENCE [LARGE SCALE GENOMIC DNA]</scope>
    <source>
        <strain>JCSC1435</strain>
    </source>
</reference>
<comment type="function">
    <text evidence="1">Provides the (R)-glutamate required for cell wall biosynthesis.</text>
</comment>
<comment type="catalytic activity">
    <reaction evidence="1">
        <text>L-glutamate = D-glutamate</text>
        <dbReference type="Rhea" id="RHEA:12813"/>
        <dbReference type="ChEBI" id="CHEBI:29985"/>
        <dbReference type="ChEBI" id="CHEBI:29986"/>
        <dbReference type="EC" id="5.1.1.3"/>
    </reaction>
</comment>
<comment type="pathway">
    <text evidence="1">Cell wall biogenesis; peptidoglycan biosynthesis.</text>
</comment>
<comment type="similarity">
    <text evidence="1">Belongs to the aspartate/glutamate racemases family.</text>
</comment>
<protein>
    <recommendedName>
        <fullName evidence="1">Glutamate racemase</fullName>
        <ecNumber evidence="1">5.1.1.3</ecNumber>
    </recommendedName>
</protein>
<name>MURI_STAHJ</name>
<gene>
    <name evidence="1" type="primary">murI</name>
    <name type="ordered locus">SH1811</name>
</gene>
<organism>
    <name type="scientific">Staphylococcus haemolyticus (strain JCSC1435)</name>
    <dbReference type="NCBI Taxonomy" id="279808"/>
    <lineage>
        <taxon>Bacteria</taxon>
        <taxon>Bacillati</taxon>
        <taxon>Bacillota</taxon>
        <taxon>Bacilli</taxon>
        <taxon>Bacillales</taxon>
        <taxon>Staphylococcaceae</taxon>
        <taxon>Staphylococcus</taxon>
    </lineage>
</organism>
<dbReference type="EC" id="5.1.1.3" evidence="1"/>
<dbReference type="EMBL" id="AP006716">
    <property type="protein sequence ID" value="BAE05120.1"/>
    <property type="molecule type" value="Genomic_DNA"/>
</dbReference>
<dbReference type="SMR" id="Q4L5F5"/>
<dbReference type="KEGG" id="sha:SH1811"/>
<dbReference type="eggNOG" id="COG0796">
    <property type="taxonomic scope" value="Bacteria"/>
</dbReference>
<dbReference type="HOGENOM" id="CLU_052344_0_2_9"/>
<dbReference type="OrthoDB" id="9801055at2"/>
<dbReference type="UniPathway" id="UPA00219"/>
<dbReference type="Proteomes" id="UP000000543">
    <property type="component" value="Chromosome"/>
</dbReference>
<dbReference type="GO" id="GO:0008881">
    <property type="term" value="F:glutamate racemase activity"/>
    <property type="evidence" value="ECO:0007669"/>
    <property type="project" value="UniProtKB-UniRule"/>
</dbReference>
<dbReference type="GO" id="GO:0071555">
    <property type="term" value="P:cell wall organization"/>
    <property type="evidence" value="ECO:0007669"/>
    <property type="project" value="UniProtKB-KW"/>
</dbReference>
<dbReference type="GO" id="GO:0009252">
    <property type="term" value="P:peptidoglycan biosynthetic process"/>
    <property type="evidence" value="ECO:0007669"/>
    <property type="project" value="UniProtKB-UniRule"/>
</dbReference>
<dbReference type="GO" id="GO:0008360">
    <property type="term" value="P:regulation of cell shape"/>
    <property type="evidence" value="ECO:0007669"/>
    <property type="project" value="UniProtKB-KW"/>
</dbReference>
<dbReference type="FunFam" id="3.40.50.1860:FF:000002">
    <property type="entry name" value="Glutamate racemase"/>
    <property type="match status" value="1"/>
</dbReference>
<dbReference type="Gene3D" id="3.40.50.1860">
    <property type="match status" value="2"/>
</dbReference>
<dbReference type="HAMAP" id="MF_00258">
    <property type="entry name" value="Glu_racemase"/>
    <property type="match status" value="1"/>
</dbReference>
<dbReference type="InterPro" id="IPR015942">
    <property type="entry name" value="Asp/Glu/hydantoin_racemase"/>
</dbReference>
<dbReference type="InterPro" id="IPR001920">
    <property type="entry name" value="Asp/Glu_race"/>
</dbReference>
<dbReference type="InterPro" id="IPR018187">
    <property type="entry name" value="Asp/Glu_racemase_AS_1"/>
</dbReference>
<dbReference type="InterPro" id="IPR033134">
    <property type="entry name" value="Asp/Glu_racemase_AS_2"/>
</dbReference>
<dbReference type="InterPro" id="IPR004391">
    <property type="entry name" value="Glu_race"/>
</dbReference>
<dbReference type="NCBIfam" id="TIGR00067">
    <property type="entry name" value="glut_race"/>
    <property type="match status" value="1"/>
</dbReference>
<dbReference type="NCBIfam" id="NF002035">
    <property type="entry name" value="PRK00865.1-3"/>
    <property type="match status" value="1"/>
</dbReference>
<dbReference type="PANTHER" id="PTHR21198">
    <property type="entry name" value="GLUTAMATE RACEMASE"/>
    <property type="match status" value="1"/>
</dbReference>
<dbReference type="PANTHER" id="PTHR21198:SF2">
    <property type="entry name" value="GLUTAMATE RACEMASE"/>
    <property type="match status" value="1"/>
</dbReference>
<dbReference type="Pfam" id="PF01177">
    <property type="entry name" value="Asp_Glu_race"/>
    <property type="match status" value="1"/>
</dbReference>
<dbReference type="SUPFAM" id="SSF53681">
    <property type="entry name" value="Aspartate/glutamate racemase"/>
    <property type="match status" value="2"/>
</dbReference>
<dbReference type="PROSITE" id="PS00923">
    <property type="entry name" value="ASP_GLU_RACEMASE_1"/>
    <property type="match status" value="1"/>
</dbReference>
<dbReference type="PROSITE" id="PS00924">
    <property type="entry name" value="ASP_GLU_RACEMASE_2"/>
    <property type="match status" value="1"/>
</dbReference>